<proteinExistence type="evidence at transcript level"/>
<feature type="chain" id="PRO_0000185688" description="Late seed maturation protein P8B6">
    <location>
        <begin position="1"/>
        <end position="83"/>
    </location>
</feature>
<feature type="region of interest" description="Disordered" evidence="1">
    <location>
        <begin position="1"/>
        <end position="83"/>
    </location>
</feature>
<feature type="compositionally biased region" description="Basic and acidic residues" evidence="1">
    <location>
        <begin position="1"/>
        <end position="18"/>
    </location>
</feature>
<feature type="compositionally biased region" description="Basic and acidic residues" evidence="1">
    <location>
        <begin position="37"/>
        <end position="51"/>
    </location>
</feature>
<feature type="compositionally biased region" description="Acidic residues" evidence="1">
    <location>
        <begin position="73"/>
        <end position="83"/>
    </location>
</feature>
<dbReference type="EMBL" id="X15440">
    <property type="protein sequence ID" value="CAA33479.1"/>
    <property type="molecule type" value="mRNA"/>
</dbReference>
<dbReference type="EMBL" id="M31978">
    <property type="protein sequence ID" value="AAA33868.1"/>
    <property type="molecule type" value="mRNA"/>
</dbReference>
<dbReference type="PIR" id="S04884">
    <property type="entry name" value="S04884"/>
</dbReference>
<dbReference type="Proteomes" id="UP000504610">
    <property type="component" value="Unplaced"/>
</dbReference>
<dbReference type="GO" id="GO:0005829">
    <property type="term" value="C:cytosol"/>
    <property type="evidence" value="ECO:0007669"/>
    <property type="project" value="TreeGrafter"/>
</dbReference>
<dbReference type="GO" id="GO:0009737">
    <property type="term" value="P:response to abscisic acid"/>
    <property type="evidence" value="ECO:0007669"/>
    <property type="project" value="TreeGrafter"/>
</dbReference>
<dbReference type="InterPro" id="IPR038956">
    <property type="entry name" value="LEA_5"/>
</dbReference>
<dbReference type="InterPro" id="IPR022377">
    <property type="entry name" value="Sm_Hydphi_plant_seed_CS"/>
</dbReference>
<dbReference type="InterPro" id="IPR000389">
    <property type="entry name" value="Small_hydrophilic_seed_prot"/>
</dbReference>
<dbReference type="PANTHER" id="PTHR34671">
    <property type="entry name" value="EM-LIKE PROTEIN GEA1"/>
    <property type="match status" value="1"/>
</dbReference>
<dbReference type="PANTHER" id="PTHR34671:SF9">
    <property type="entry name" value="EM-LIKE PROTEIN GEA6"/>
    <property type="match status" value="1"/>
</dbReference>
<dbReference type="Pfam" id="PF00477">
    <property type="entry name" value="LEA_5"/>
    <property type="match status" value="1"/>
</dbReference>
<dbReference type="PROSITE" id="PS00431">
    <property type="entry name" value="SMALL_HYDR_PLANT_SEED"/>
    <property type="match status" value="1"/>
</dbReference>
<evidence type="ECO:0000256" key="1">
    <source>
        <dbReference type="SAM" id="MobiDB-lite"/>
    </source>
</evidence>
<evidence type="ECO:0000305" key="2"/>
<keyword id="KW-0963">Cytoplasm</keyword>
<keyword id="KW-1185">Reference proteome</keyword>
<protein>
    <recommendedName>
        <fullName>Late seed maturation protein P8B6</fullName>
    </recommendedName>
</protein>
<organism>
    <name type="scientific">Raphanus sativus</name>
    <name type="common">Radish</name>
    <name type="synonym">Raphanus raphanistrum var. sativus</name>
    <dbReference type="NCBI Taxonomy" id="3726"/>
    <lineage>
        <taxon>Eukaryota</taxon>
        <taxon>Viridiplantae</taxon>
        <taxon>Streptophyta</taxon>
        <taxon>Embryophyta</taxon>
        <taxon>Tracheophyta</taxon>
        <taxon>Spermatophyta</taxon>
        <taxon>Magnoliopsida</taxon>
        <taxon>eudicotyledons</taxon>
        <taxon>Gunneridae</taxon>
        <taxon>Pentapetalae</taxon>
        <taxon>rosids</taxon>
        <taxon>malvids</taxon>
        <taxon>Brassicales</taxon>
        <taxon>Brassicaceae</taxon>
        <taxon>Brassiceae</taxon>
        <taxon>Raphanus</taxon>
    </lineage>
</organism>
<sequence length="83" mass="8981">MASQQEKKQLDERAKKGETVVPGGTGGKSFEAQQHLAEGRSRGGNTRKEQLGSEGYQQMGRKGGSTPDKTDKEDAEDEPSTRT</sequence>
<reference key="1">
    <citation type="journal article" date="1989" name="Plant Physiol.">
        <title>Characterization of a radish nuclear gene expressed during late seed maturation.</title>
        <authorList>
            <person name="Raynal M."/>
            <person name="Depigny D."/>
            <person name="Cooke R."/>
            <person name="Delseny M."/>
        </authorList>
    </citation>
    <scope>NUCLEOTIDE SEQUENCE [MRNA]</scope>
    <source>
        <strain>cv. Avignon</strain>
        <tissue>Seed</tissue>
    </source>
</reference>
<name>SEEP_RAPSA</name>
<comment type="function">
    <text>This protein may play a role in equipping the seed for survival, maintaining a minimal level of hydration in the dry organism and preventing the denaturation of cytoplasmic components, or may play a role during imbibition by controlling water uptake.</text>
</comment>
<comment type="subcellular location">
    <subcellularLocation>
        <location evidence="2">Cytoplasm</location>
    </subcellularLocation>
</comment>
<comment type="developmental stage">
    <text>Expressed during late seed maturation.</text>
</comment>
<comment type="induction">
    <text evidence="2">By abscisic acid (ABA).</text>
</comment>
<comment type="similarity">
    <text evidence="2">Belongs to the small hydrophilic plant seed protein family.</text>
</comment>
<accession>P11573</accession>